<proteinExistence type="inferred from homology"/>
<protein>
    <recommendedName>
        <fullName evidence="1">Small ribosomal subunit protein uS7</fullName>
    </recommendedName>
    <alternativeName>
        <fullName evidence="2">30S ribosomal protein S7</fullName>
    </alternativeName>
</protein>
<reference key="1">
    <citation type="submission" date="2005-09" db="EMBL/GenBank/DDBJ databases">
        <title>Complete sequence of chromosome 1 of Rhodobacter sphaeroides 2.4.1.</title>
        <authorList>
            <person name="Copeland A."/>
            <person name="Lucas S."/>
            <person name="Lapidus A."/>
            <person name="Barry K."/>
            <person name="Detter J.C."/>
            <person name="Glavina T."/>
            <person name="Hammon N."/>
            <person name="Israni S."/>
            <person name="Pitluck S."/>
            <person name="Richardson P."/>
            <person name="Mackenzie C."/>
            <person name="Choudhary M."/>
            <person name="Larimer F."/>
            <person name="Hauser L.J."/>
            <person name="Land M."/>
            <person name="Donohue T.J."/>
            <person name="Kaplan S."/>
        </authorList>
    </citation>
    <scope>NUCLEOTIDE SEQUENCE [LARGE SCALE GENOMIC DNA]</scope>
    <source>
        <strain>ATCC 17023 / DSM 158 / JCM 6121 / CCUG 31486 / LMG 2827 / NBRC 12203 / NCIMB 8253 / ATH 2.4.1.</strain>
    </source>
</reference>
<evidence type="ECO:0000255" key="1">
    <source>
        <dbReference type="HAMAP-Rule" id="MF_00480"/>
    </source>
</evidence>
<evidence type="ECO:0000305" key="2"/>
<keyword id="KW-1185">Reference proteome</keyword>
<keyword id="KW-0687">Ribonucleoprotein</keyword>
<keyword id="KW-0689">Ribosomal protein</keyword>
<keyword id="KW-0694">RNA-binding</keyword>
<keyword id="KW-0699">rRNA-binding</keyword>
<keyword id="KW-0820">tRNA-binding</keyword>
<feature type="chain" id="PRO_0000226523" description="Small ribosomal subunit protein uS7">
    <location>
        <begin position="1"/>
        <end position="156"/>
    </location>
</feature>
<dbReference type="EMBL" id="CP000143">
    <property type="protein sequence ID" value="ABA77858.1"/>
    <property type="molecule type" value="Genomic_DNA"/>
</dbReference>
<dbReference type="RefSeq" id="WP_002722484.1">
    <property type="nucleotide sequence ID" value="NZ_CP030271.1"/>
</dbReference>
<dbReference type="RefSeq" id="YP_351759.1">
    <property type="nucleotide sequence ID" value="NC_007493.2"/>
</dbReference>
<dbReference type="SMR" id="Q3J5S6"/>
<dbReference type="STRING" id="272943.RSP_1709"/>
<dbReference type="EnsemblBacteria" id="ABA77858">
    <property type="protein sequence ID" value="ABA77858"/>
    <property type="gene ID" value="RSP_1709"/>
</dbReference>
<dbReference type="GeneID" id="67445496"/>
<dbReference type="KEGG" id="rsp:RSP_1709"/>
<dbReference type="PATRIC" id="fig|272943.9.peg.589"/>
<dbReference type="eggNOG" id="COG0049">
    <property type="taxonomic scope" value="Bacteria"/>
</dbReference>
<dbReference type="OrthoDB" id="9807653at2"/>
<dbReference type="PhylomeDB" id="Q3J5S6"/>
<dbReference type="Proteomes" id="UP000002703">
    <property type="component" value="Chromosome 1"/>
</dbReference>
<dbReference type="GO" id="GO:0015935">
    <property type="term" value="C:small ribosomal subunit"/>
    <property type="evidence" value="ECO:0007669"/>
    <property type="project" value="InterPro"/>
</dbReference>
<dbReference type="GO" id="GO:0019843">
    <property type="term" value="F:rRNA binding"/>
    <property type="evidence" value="ECO:0007669"/>
    <property type="project" value="UniProtKB-UniRule"/>
</dbReference>
<dbReference type="GO" id="GO:0003735">
    <property type="term" value="F:structural constituent of ribosome"/>
    <property type="evidence" value="ECO:0007669"/>
    <property type="project" value="InterPro"/>
</dbReference>
<dbReference type="GO" id="GO:0000049">
    <property type="term" value="F:tRNA binding"/>
    <property type="evidence" value="ECO:0007669"/>
    <property type="project" value="UniProtKB-UniRule"/>
</dbReference>
<dbReference type="GO" id="GO:0006412">
    <property type="term" value="P:translation"/>
    <property type="evidence" value="ECO:0007669"/>
    <property type="project" value="UniProtKB-UniRule"/>
</dbReference>
<dbReference type="CDD" id="cd14869">
    <property type="entry name" value="uS7_Bacteria"/>
    <property type="match status" value="1"/>
</dbReference>
<dbReference type="FunFam" id="1.10.455.10:FF:000001">
    <property type="entry name" value="30S ribosomal protein S7"/>
    <property type="match status" value="1"/>
</dbReference>
<dbReference type="Gene3D" id="1.10.455.10">
    <property type="entry name" value="Ribosomal protein S7 domain"/>
    <property type="match status" value="1"/>
</dbReference>
<dbReference type="HAMAP" id="MF_00480_B">
    <property type="entry name" value="Ribosomal_uS7_B"/>
    <property type="match status" value="1"/>
</dbReference>
<dbReference type="InterPro" id="IPR000235">
    <property type="entry name" value="Ribosomal_uS7"/>
</dbReference>
<dbReference type="InterPro" id="IPR005717">
    <property type="entry name" value="Ribosomal_uS7_bac/org-type"/>
</dbReference>
<dbReference type="InterPro" id="IPR020606">
    <property type="entry name" value="Ribosomal_uS7_CS"/>
</dbReference>
<dbReference type="InterPro" id="IPR023798">
    <property type="entry name" value="Ribosomal_uS7_dom"/>
</dbReference>
<dbReference type="InterPro" id="IPR036823">
    <property type="entry name" value="Ribosomal_uS7_dom_sf"/>
</dbReference>
<dbReference type="NCBIfam" id="TIGR01029">
    <property type="entry name" value="rpsG_bact"/>
    <property type="match status" value="1"/>
</dbReference>
<dbReference type="PANTHER" id="PTHR11205">
    <property type="entry name" value="RIBOSOMAL PROTEIN S7"/>
    <property type="match status" value="1"/>
</dbReference>
<dbReference type="Pfam" id="PF00177">
    <property type="entry name" value="Ribosomal_S7"/>
    <property type="match status" value="1"/>
</dbReference>
<dbReference type="PIRSF" id="PIRSF002122">
    <property type="entry name" value="RPS7p_RPS7a_RPS5e_RPS7o"/>
    <property type="match status" value="1"/>
</dbReference>
<dbReference type="SUPFAM" id="SSF47973">
    <property type="entry name" value="Ribosomal protein S7"/>
    <property type="match status" value="1"/>
</dbReference>
<dbReference type="PROSITE" id="PS00052">
    <property type="entry name" value="RIBOSOMAL_S7"/>
    <property type="match status" value="1"/>
</dbReference>
<comment type="function">
    <text evidence="1">One of the primary rRNA binding proteins, it binds directly to 16S rRNA where it nucleates assembly of the head domain of the 30S subunit. Is located at the subunit interface close to the decoding center, probably blocks exit of the E-site tRNA.</text>
</comment>
<comment type="subunit">
    <text evidence="1">Part of the 30S ribosomal subunit. Contacts proteins S9 and S11.</text>
</comment>
<comment type="similarity">
    <text evidence="1">Belongs to the universal ribosomal protein uS7 family.</text>
</comment>
<name>RS7_CERS4</name>
<accession>Q3J5S6</accession>
<organism>
    <name type="scientific">Cereibacter sphaeroides (strain ATCC 17023 / DSM 158 / JCM 6121 / CCUG 31486 / LMG 2827 / NBRC 12203 / NCIMB 8253 / ATH 2.4.1.)</name>
    <name type="common">Rhodobacter sphaeroides</name>
    <dbReference type="NCBI Taxonomy" id="272943"/>
    <lineage>
        <taxon>Bacteria</taxon>
        <taxon>Pseudomonadati</taxon>
        <taxon>Pseudomonadota</taxon>
        <taxon>Alphaproteobacteria</taxon>
        <taxon>Rhodobacterales</taxon>
        <taxon>Paracoccaceae</taxon>
        <taxon>Cereibacter</taxon>
    </lineage>
</organism>
<gene>
    <name evidence="1" type="primary">rpsG</name>
    <name type="ordered locus">RHOS4_02900</name>
    <name type="ORF">RSP_1709</name>
</gene>
<sequence length="156" mass="17950">MSRRHAAEKREILPDAKFGDTVLTKFMNNLMIDGKKSVAESIVYNALDRVQTRLKREPLEAFHEALDNVKPSVEVRSRRVGGATYQVPVEVRTERREALAIRWLITAARKRNENTMEERLAAELADACNNRGTAVKKREDTHKMADANKAFSHYRW</sequence>